<reference key="1">
    <citation type="submission" date="1995-10" db="EMBL/GenBank/DDBJ databases">
        <authorList>
            <person name="Delius H."/>
        </authorList>
    </citation>
    <scope>NUCLEOTIDE SEQUENCE [GENOMIC DNA]</scope>
</reference>
<proteinExistence type="inferred from homology"/>
<organism>
    <name type="scientific">Human papillomavirus 21</name>
    <dbReference type="NCBI Taxonomy" id="31548"/>
    <lineage>
        <taxon>Viruses</taxon>
        <taxon>Monodnaviria</taxon>
        <taxon>Shotokuvirae</taxon>
        <taxon>Cossaviricota</taxon>
        <taxon>Papovaviricetes</taxon>
        <taxon>Zurhausenvirales</taxon>
        <taxon>Papillomaviridae</taxon>
        <taxon>Firstpapillomavirinae</taxon>
        <taxon>Betapapillomavirus</taxon>
        <taxon>Betapapillomavirus 1</taxon>
    </lineage>
</organism>
<accession>P50759</accession>
<organismHost>
    <name type="scientific">Homo sapiens</name>
    <name type="common">Human</name>
    <dbReference type="NCBI Taxonomy" id="9606"/>
</organismHost>
<sequence length="603" mass="68983">MADPKGSTSKEGLEDWCIVEAECSDVENDLEELFDRDTDSDISELLDDNDLEQGNSRELFHQQESKESEEQLQKLKRKYLSPKAVAQLSPRLESITLSPQQKSKRRLFAEQDSGLECTLTNEEDVSSEVEVPALDSQPVAEAQLGTVDIHYKELLRASNNKAILMAKFKEFFGVGFNDLTRQFKSYKTCCNAWVLSVYAVHDDLLESSKQLLQQHCDYIWIRGIGAMSLFLLCFKVGKNRGTVHKLMTAMLNVHEKQIISEPPKLRNVAAALFWYKGAMGSGAFTYGPYPDWIAQQTIVGHQSTEASAFDMSAMVQWAFDNNYLDEADIAYQYAKLAPEDSNAVAWLAHNNQARYVREVASMVRFYKKGQMKEMSMSEWIHTRINEVEGEGHWSTIAKFLRYQQVNFIMFLAALKDMLHSVPKRNCILIYGPPNTGKSAFTMSLIHVLRGRVLSFVNSKSQFWLQPMSECKIALIDDVTDPCWIYMDTYLRNGLDGHVVSLDCKHKAPMQTKFPALLLTSNINVHNEVNYRYLHSRIKGFEFPNPFPMKADNTPEFELTDQSWKSFFTRLWNQLELSDQEDEGENGESQRSFQCSARSANEHL</sequence>
<dbReference type="EC" id="5.6.2.4" evidence="1"/>
<dbReference type="EMBL" id="U31779">
    <property type="protein sequence ID" value="AAA79396.1"/>
    <property type="molecule type" value="Genomic_DNA"/>
</dbReference>
<dbReference type="SMR" id="P50759"/>
<dbReference type="Proteomes" id="UP000009165">
    <property type="component" value="Genome"/>
</dbReference>
<dbReference type="GO" id="GO:0042025">
    <property type="term" value="C:host cell nucleus"/>
    <property type="evidence" value="ECO:0007669"/>
    <property type="project" value="UniProtKB-SubCell"/>
</dbReference>
<dbReference type="GO" id="GO:0005524">
    <property type="term" value="F:ATP binding"/>
    <property type="evidence" value="ECO:0007669"/>
    <property type="project" value="UniProtKB-UniRule"/>
</dbReference>
<dbReference type="GO" id="GO:0016887">
    <property type="term" value="F:ATP hydrolysis activity"/>
    <property type="evidence" value="ECO:0007669"/>
    <property type="project" value="RHEA"/>
</dbReference>
<dbReference type="GO" id="GO:0003677">
    <property type="term" value="F:DNA binding"/>
    <property type="evidence" value="ECO:0007669"/>
    <property type="project" value="UniProtKB-UniRule"/>
</dbReference>
<dbReference type="GO" id="GO:0003678">
    <property type="term" value="F:DNA helicase activity"/>
    <property type="evidence" value="ECO:0007669"/>
    <property type="project" value="UniProtKB-UniRule"/>
</dbReference>
<dbReference type="GO" id="GO:0006260">
    <property type="term" value="P:DNA replication"/>
    <property type="evidence" value="ECO:0007669"/>
    <property type="project" value="UniProtKB-UniRule"/>
</dbReference>
<dbReference type="Gene3D" id="3.40.1310.10">
    <property type="match status" value="1"/>
</dbReference>
<dbReference type="Gene3D" id="3.40.50.300">
    <property type="entry name" value="P-loop containing nucleotide triphosphate hydrolases"/>
    <property type="match status" value="1"/>
</dbReference>
<dbReference type="Gene3D" id="1.10.10.510">
    <property type="entry name" value="Zinc finger, large T-antigen D1 domain"/>
    <property type="match status" value="1"/>
</dbReference>
<dbReference type="HAMAP" id="MF_04000">
    <property type="entry name" value="PPV_E1"/>
    <property type="match status" value="1"/>
</dbReference>
<dbReference type="InterPro" id="IPR014015">
    <property type="entry name" value="Helicase_SF3_DNA-vir"/>
</dbReference>
<dbReference type="InterPro" id="IPR027417">
    <property type="entry name" value="P-loop_NTPase"/>
</dbReference>
<dbReference type="InterPro" id="IPR001177">
    <property type="entry name" value="PPV_DNA_helicase_E1_C"/>
</dbReference>
<dbReference type="InterPro" id="IPR014000">
    <property type="entry name" value="PPV_DNA_helicase_E1_N"/>
</dbReference>
<dbReference type="InterPro" id="IPR046832">
    <property type="entry name" value="PPV_E1_DBD"/>
</dbReference>
<dbReference type="InterPro" id="IPR046935">
    <property type="entry name" value="PPV_E1_DBD_sf"/>
</dbReference>
<dbReference type="InterPro" id="IPR016393">
    <property type="entry name" value="Rep_E1_papillomaV"/>
</dbReference>
<dbReference type="InterPro" id="IPR037102">
    <property type="entry name" value="Znf_lg_T-Ag_D1_dom_sf"/>
</dbReference>
<dbReference type="Pfam" id="PF00519">
    <property type="entry name" value="PPV_E1_C"/>
    <property type="match status" value="1"/>
</dbReference>
<dbReference type="Pfam" id="PF20450">
    <property type="entry name" value="PPV_E1_DBD"/>
    <property type="match status" value="1"/>
</dbReference>
<dbReference type="Pfam" id="PF00524">
    <property type="entry name" value="PPV_E1_N"/>
    <property type="match status" value="1"/>
</dbReference>
<dbReference type="PIRSF" id="PIRSF003383">
    <property type="entry name" value="Rep_E1_papillomaV"/>
    <property type="match status" value="1"/>
</dbReference>
<dbReference type="SUPFAM" id="SSF55464">
    <property type="entry name" value="Origin of replication-binding domain, RBD-like"/>
    <property type="match status" value="1"/>
</dbReference>
<dbReference type="SUPFAM" id="SSF52540">
    <property type="entry name" value="P-loop containing nucleoside triphosphate hydrolases"/>
    <property type="match status" value="1"/>
</dbReference>
<dbReference type="PROSITE" id="PS51206">
    <property type="entry name" value="SF3_HELICASE_1"/>
    <property type="match status" value="1"/>
</dbReference>
<evidence type="ECO:0000255" key="1">
    <source>
        <dbReference type="HAMAP-Rule" id="MF_04000"/>
    </source>
</evidence>
<evidence type="ECO:0000256" key="2">
    <source>
        <dbReference type="SAM" id="MobiDB-lite"/>
    </source>
</evidence>
<keyword id="KW-0067">ATP-binding</keyword>
<keyword id="KW-0235">DNA replication</keyword>
<keyword id="KW-0238">DNA-binding</keyword>
<keyword id="KW-0244">Early protein</keyword>
<keyword id="KW-0347">Helicase</keyword>
<keyword id="KW-1048">Host nucleus</keyword>
<keyword id="KW-0378">Hydrolase</keyword>
<keyword id="KW-0413">Isomerase</keyword>
<keyword id="KW-1017">Isopeptide bond</keyword>
<keyword id="KW-0547">Nucleotide-binding</keyword>
<keyword id="KW-0597">Phosphoprotein</keyword>
<keyword id="KW-1185">Reference proteome</keyword>
<keyword id="KW-0832">Ubl conjugation</keyword>
<protein>
    <recommendedName>
        <fullName evidence="1">Replication protein E1</fullName>
        <ecNumber evidence="1">5.6.2.4</ecNumber>
    </recommendedName>
    <alternativeName>
        <fullName evidence="1">ATP-dependent helicase E1</fullName>
    </alternativeName>
    <alternativeName>
        <fullName evidence="1">DNA 3'-5' helicase E1</fullName>
    </alternativeName>
</protein>
<comment type="function">
    <text evidence="1">ATP-dependent DNA 3'-5' helicase required for initiation of viral DNA replication. It forms a complex with the viral E2 protein. The E1-E2 complex binds to the replication origin which contains binding sites for both proteins. During the initial step, a dimer of E1 interacts with a dimer of protein E2 leading to a complex that binds the viral origin of replication with high specificity. Then, a second dimer of E1 displaces the E2 dimer in an ATP-dependent manner to form the E1 tetramer. Following this, two E1 monomers are added to each half of the site, which results in the formation of two E1 trimers on the viral ori. Subsequently, two hexamers will be created. The double hexamer acts as a bi-directional helicase machinery and unwinds the viral DNA and then recruits the host DNA polymerase to start replication.</text>
</comment>
<comment type="catalytic activity">
    <reaction evidence="1">
        <text>Couples ATP hydrolysis with the unwinding of duplex DNA by translocating in the 3'-5' direction.</text>
        <dbReference type="EC" id="5.6.2.4"/>
    </reaction>
</comment>
<comment type="catalytic activity">
    <reaction evidence="1">
        <text>ATP + H2O = ADP + phosphate + H(+)</text>
        <dbReference type="Rhea" id="RHEA:13065"/>
        <dbReference type="ChEBI" id="CHEBI:15377"/>
        <dbReference type="ChEBI" id="CHEBI:15378"/>
        <dbReference type="ChEBI" id="CHEBI:30616"/>
        <dbReference type="ChEBI" id="CHEBI:43474"/>
        <dbReference type="ChEBI" id="CHEBI:456216"/>
        <dbReference type="EC" id="5.6.2.4"/>
    </reaction>
</comment>
<comment type="subunit">
    <text evidence="1">Can form hexamers. Interacts with E2 protein; this interaction increases E1 DNA binding specificity. Interacts with host DNA polymerase subunit POLA2. Interacts with host single stranded DNA-binding protein RPA1. Interacts with host TOP1; this interaction stimulates the enzymatic activity of TOP1.</text>
</comment>
<comment type="subcellular location">
    <subcellularLocation>
        <location evidence="1">Host nucleus</location>
    </subcellularLocation>
</comment>
<comment type="PTM">
    <text evidence="1">Phosphorylated.</text>
</comment>
<comment type="PTM">
    <text evidence="1">Sumoylated.</text>
</comment>
<comment type="similarity">
    <text evidence="1">Belongs to the papillomaviridae E1 protein family.</text>
</comment>
<name>VE1_HPV21</name>
<feature type="chain" id="PRO_0000133119" description="Replication protein E1">
    <location>
        <begin position="1"/>
        <end position="603"/>
    </location>
</feature>
<feature type="domain" description="SF3 helicase" evidence="1">
    <location>
        <begin position="405"/>
        <end position="555"/>
    </location>
</feature>
<feature type="region of interest" description="Disordered" evidence="2">
    <location>
        <begin position="47"/>
        <end position="68"/>
    </location>
</feature>
<feature type="region of interest" description="DNA-binding region" evidence="1">
    <location>
        <begin position="143"/>
        <end position="306"/>
    </location>
</feature>
<feature type="region of interest" description="Disordered" evidence="2">
    <location>
        <begin position="578"/>
        <end position="603"/>
    </location>
</feature>
<feature type="short sequence motif" description="Nuclear localization signal" evidence="1">
    <location>
        <begin position="76"/>
        <end position="78"/>
    </location>
</feature>
<feature type="short sequence motif" description="Nuclear export signal" evidence="1">
    <location>
        <begin position="88"/>
        <end position="97"/>
    </location>
</feature>
<feature type="compositionally biased region" description="Basic and acidic residues" evidence="2">
    <location>
        <begin position="58"/>
        <end position="68"/>
    </location>
</feature>
<feature type="compositionally biased region" description="Polar residues" evidence="2">
    <location>
        <begin position="586"/>
        <end position="603"/>
    </location>
</feature>
<feature type="binding site" evidence="1">
    <location>
        <begin position="431"/>
        <end position="438"/>
    </location>
    <ligand>
        <name>ATP</name>
        <dbReference type="ChEBI" id="CHEBI:30616"/>
    </ligand>
</feature>
<feature type="modified residue" description="Phosphoserine; by host" evidence="1">
    <location>
        <position position="81"/>
    </location>
</feature>
<feature type="modified residue" description="Phosphoserine; by host" evidence="1">
    <location>
        <position position="89"/>
    </location>
</feature>
<feature type="cross-link" description="Glycyl lysine isopeptide (Lys-Gly) (interchain with G-Cter in SUMO)" evidence="1">
    <location>
        <position position="512"/>
    </location>
</feature>
<gene>
    <name evidence="1" type="primary">E1</name>
</gene>